<proteinExistence type="predicted"/>
<comment type="function">
    <text evidence="1">Essential for virus function.</text>
</comment>
<keyword id="KW-1185">Reference proteome</keyword>
<organismHost>
    <name type="scientific">Saccharolobus solfataricus</name>
    <name type="common">Sulfolobus solfataricus</name>
    <dbReference type="NCBI Taxonomy" id="2287"/>
</organismHost>
<dbReference type="EMBL" id="X07234">
    <property type="protein sequence ID" value="CAA30208.1"/>
    <property type="molecule type" value="Genomic_DNA"/>
</dbReference>
<dbReference type="PIR" id="S03241">
    <property type="entry name" value="S03241"/>
</dbReference>
<dbReference type="RefSeq" id="NP_039806.1">
    <property type="nucleotide sequence ID" value="NC_001338.1"/>
</dbReference>
<dbReference type="KEGG" id="vg:2559655"/>
<dbReference type="OrthoDB" id="33096at10239"/>
<dbReference type="Proteomes" id="UP000000854">
    <property type="component" value="Genome"/>
</dbReference>
<dbReference type="InterPro" id="IPR035194">
    <property type="entry name" value="DUF5461"/>
</dbReference>
<dbReference type="Pfam" id="PF17545">
    <property type="entry name" value="DUF5461"/>
    <property type="match status" value="1"/>
</dbReference>
<gene>
    <name type="ORF">c102b</name>
</gene>
<protein>
    <recommendedName>
        <fullName>Uncharacterized protein C-102b</fullName>
    </recommendedName>
</protein>
<reference key="1">
    <citation type="journal article" date="1991" name="Virology">
        <title>Complete nucleotide sequence of the virus SSV1 of the archaebacterium Sulfolobus shibatae.</title>
        <authorList>
            <person name="Palm P."/>
            <person name="Schleper C."/>
            <person name="Grampp B."/>
            <person name="Yeats S."/>
            <person name="McWilliam P."/>
            <person name="Reiter W.-D."/>
            <person name="Zillig W."/>
        </authorList>
    </citation>
    <scope>NUCLEOTIDE SEQUENCE [GENOMIC DNA]</scope>
</reference>
<reference key="2">
    <citation type="journal article" date="1999" name="Genetics">
        <title>Genetic requirements for the function of the archaeal virus SSV1 in Sulfolobus solfataricus: construction and testing of viral shuttle vectors.</title>
        <authorList>
            <person name="Stedman K.M."/>
            <person name="Schleper C."/>
            <person name="Rumpf E."/>
            <person name="Zillig W."/>
        </authorList>
    </citation>
    <scope>FUNCTION</scope>
</reference>
<evidence type="ECO:0000269" key="1">
    <source>
    </source>
</evidence>
<sequence length="102" mass="11636">MVSVTEIITYGREAIERIICKYFKDSKIEKILFLPSEEDVKAKYIIGRVGFIRISNTWSGIVVVDGVQIPFVAEVHLNGKIDIYLYPQKDFYLAHLVGELNG</sequence>
<feature type="chain" id="PRO_0000223016" description="Uncharacterized protein C-102b">
    <location>
        <begin position="1"/>
        <end position="102"/>
    </location>
</feature>
<accession>P20207</accession>
<name>C102B_SSV1</name>
<organism>
    <name type="scientific">Sulfolobus spindle-shape virus 1</name>
    <name type="common">SSV1</name>
    <dbReference type="NCBI Taxonomy" id="244589"/>
    <lineage>
        <taxon>Viruses</taxon>
        <taxon>Viruses incertae sedis</taxon>
        <taxon>Fuselloviridae</taxon>
        <taxon>Alphafusellovirus</taxon>
    </lineage>
</organism>